<keyword id="KW-0002">3D-structure</keyword>
<keyword id="KW-0119">Carbohydrate metabolism</keyword>
<keyword id="KW-0997">Cell inner membrane</keyword>
<keyword id="KW-1003">Cell membrane</keyword>
<keyword id="KW-0903">Direct protein sequencing</keyword>
<keyword id="KW-0294">Fucose metabolism</keyword>
<keyword id="KW-0472">Membrane</keyword>
<keyword id="KW-1185">Reference proteome</keyword>
<keyword id="KW-0762">Sugar transport</keyword>
<keyword id="KW-0769">Symport</keyword>
<keyword id="KW-0812">Transmembrane</keyword>
<keyword id="KW-1133">Transmembrane helix</keyword>
<keyword id="KW-0813">Transport</keyword>
<evidence type="ECO:0000269" key="1">
    <source>
    </source>
</evidence>
<evidence type="ECO:0000269" key="2">
    <source>
    </source>
</evidence>
<evidence type="ECO:0000269" key="3">
    <source>
    </source>
</evidence>
<evidence type="ECO:0000269" key="4">
    <source>
    </source>
</evidence>
<evidence type="ECO:0000269" key="5">
    <source>
    </source>
</evidence>
<evidence type="ECO:0000269" key="6">
    <source>
    </source>
</evidence>
<evidence type="ECO:0000303" key="7">
    <source>
    </source>
</evidence>
<evidence type="ECO:0000305" key="8"/>
<evidence type="ECO:0007744" key="9">
    <source>
        <dbReference type="PDB" id="3O7P"/>
    </source>
</evidence>
<evidence type="ECO:0007744" key="10">
    <source>
        <dbReference type="PDB" id="3O7Q"/>
    </source>
</evidence>
<evidence type="ECO:0007829" key="11">
    <source>
        <dbReference type="PDB" id="3O7P"/>
    </source>
</evidence>
<evidence type="ECO:0007829" key="12">
    <source>
        <dbReference type="PDB" id="3O7Q"/>
    </source>
</evidence>
<comment type="function">
    <text evidence="4 5 6">Mediates the uptake of L-fucose across the boundary membrane with the concomitant transport of protons into the cell (symport system) (PubMed:2829831, PubMed:8052131). Can also transport L-galactose and D-arabinose, but at reduced rates compared with L-fucose. Is not able to transport L-rhamnose and L-arabinose (PubMed:2829831). Binds D-arabinose with the highest affinity, followed by L-fucose, and then by L-galactose (PubMed:9826601).</text>
</comment>
<comment type="catalytic activity">
    <reaction evidence="3 4 5">
        <text>L-fucose(in) + H(+)(in) = L-fucose(out) + H(+)(out)</text>
        <dbReference type="Rhea" id="RHEA:29023"/>
        <dbReference type="ChEBI" id="CHEBI:2181"/>
        <dbReference type="ChEBI" id="CHEBI:15378"/>
    </reaction>
    <physiologicalReaction direction="right-to-left" evidence="4 5">
        <dbReference type="Rhea" id="RHEA:29025"/>
    </physiologicalReaction>
</comment>
<comment type="catalytic activity">
    <reaction evidence="4">
        <text>D-arabinose(out) + H(+)(out) = D-arabinose(in) + H(+)(in)</text>
        <dbReference type="Rhea" id="RHEA:66428"/>
        <dbReference type="ChEBI" id="CHEBI:15378"/>
        <dbReference type="ChEBI" id="CHEBI:46994"/>
    </reaction>
</comment>
<comment type="catalytic activity">
    <reaction evidence="4">
        <text>L-galactose(out) + H(+)(out) = L-galactose(in) + H(+)(in)</text>
        <dbReference type="Rhea" id="RHEA:66432"/>
        <dbReference type="ChEBI" id="CHEBI:15378"/>
        <dbReference type="ChEBI" id="CHEBI:37619"/>
    </reaction>
</comment>
<comment type="biophysicochemical properties">
    <phDependence>
        <text evidence="4">Optimum pH is 5.5 for fucose transport.</text>
    </phDependence>
</comment>
<comment type="subcellular location">
    <subcellularLocation>
        <location evidence="1 2">Cell inner membrane</location>
        <topology evidence="2">Multi-pass membrane protein</topology>
    </subcellularLocation>
</comment>
<comment type="induction">
    <text evidence="4">By L-fucose.</text>
</comment>
<comment type="domain">
    <text evidence="2 3">Contains an outward-open, amphipathic cavity. Contains only two acidic residues along the transport path, Asp-46 and Glu-135, which can undergo cycles of protonation and deprotonation. Asp-46 and Glu-135 have an essential role, coupling proton translocation and substrate recognition (PubMed:20877283). Sugar binding probably induces a conformational change in which the outward-facing cavity closes, thereby bringing Trp-38 and Trp-278 into close proximity around the bound sugar to form an occluded intermediate (PubMed:22930818).</text>
</comment>
<comment type="similarity">
    <text evidence="8">Belongs to the major facilitator superfamily. FHS transporter (TC 2.A.1.7) family.</text>
</comment>
<protein>
    <recommendedName>
        <fullName evidence="8">L-fucose-proton symporter</fullName>
    </recommendedName>
    <alternativeName>
        <fullName>6-deoxy-L-galactose permease</fullName>
    </alternativeName>
    <alternativeName>
        <fullName>L-fucose permease</fullName>
    </alternativeName>
    <alternativeName>
        <fullName evidence="7">L-fucose-H(+) symport protein</fullName>
    </alternativeName>
</protein>
<reference key="1">
    <citation type="journal article" date="1989" name="Nucleic Acids Res.">
        <title>The nucleotide sequence of Escherichia coli genes for L-fucose dissimilation.</title>
        <authorList>
            <person name="Lu Z."/>
            <person name="Lin E.C.C."/>
        </authorList>
    </citation>
    <scope>NUCLEOTIDE SEQUENCE [GENOMIC DNA]</scope>
    <source>
        <strain>K12</strain>
    </source>
</reference>
<reference key="2">
    <citation type="journal article" date="1997" name="Science">
        <title>The complete genome sequence of Escherichia coli K-12.</title>
        <authorList>
            <person name="Blattner F.R."/>
            <person name="Plunkett G. III"/>
            <person name="Bloch C.A."/>
            <person name="Perna N.T."/>
            <person name="Burland V."/>
            <person name="Riley M."/>
            <person name="Collado-Vides J."/>
            <person name="Glasner J.D."/>
            <person name="Rode C.K."/>
            <person name="Mayhew G.F."/>
            <person name="Gregor J."/>
            <person name="Davis N.W."/>
            <person name="Kirkpatrick H.A."/>
            <person name="Goeden M.A."/>
            <person name="Rose D.J."/>
            <person name="Mau B."/>
            <person name="Shao Y."/>
        </authorList>
    </citation>
    <scope>NUCLEOTIDE SEQUENCE [LARGE SCALE GENOMIC DNA]</scope>
    <source>
        <strain>K12 / MG1655 / ATCC 47076</strain>
    </source>
</reference>
<reference key="3">
    <citation type="journal article" date="2006" name="Mol. Syst. Biol.">
        <title>Highly accurate genome sequences of Escherichia coli K-12 strains MG1655 and W3110.</title>
        <authorList>
            <person name="Hayashi K."/>
            <person name="Morooka N."/>
            <person name="Yamamoto Y."/>
            <person name="Fujita K."/>
            <person name="Isono K."/>
            <person name="Choi S."/>
            <person name="Ohtsubo E."/>
            <person name="Baba T."/>
            <person name="Wanner B.L."/>
            <person name="Mori H."/>
            <person name="Horiuchi T."/>
        </authorList>
    </citation>
    <scope>NUCLEOTIDE SEQUENCE [LARGE SCALE GENOMIC DNA]</scope>
    <source>
        <strain>K12 / W3110 / ATCC 27325 / DSM 5911</strain>
    </source>
</reference>
<reference key="4">
    <citation type="journal article" date="1989" name="J. Bacteriol.">
        <title>Constitutive activation of the fucAO operon and silencing of the divergently transcribed fucPIK operon by an IS5 element in Escherichia coli mutants selected for growth on L-1,2-propanediol.</title>
        <authorList>
            <person name="Chen Y.M."/>
            <person name="Lu Z."/>
            <person name="Lin E.C.C."/>
        </authorList>
    </citation>
    <scope>NUCLEOTIDE SEQUENCE [GENOMIC DNA] OF 1-32</scope>
</reference>
<reference key="5">
    <citation type="journal article" date="1994" name="Mol. Microbiol.">
        <title>Identification of a novel sugar-H+ symport protein, FucP, for transport of L-fucose into Escherichia coli.</title>
        <authorList>
            <person name="Gunn F.J."/>
            <person name="Tate C.G."/>
            <person name="Henderson P.J.F."/>
        </authorList>
    </citation>
    <scope>PROTEIN SEQUENCE OF 2-21</scope>
    <scope>FUNCTION</scope>
    <scope>CATALYTIC ACTIVITY</scope>
</reference>
<reference key="6">
    <citation type="journal article" date="1987" name="Biochem. J.">
        <title>Proton-linked L-fucose transport in Escherichia coli.</title>
        <authorList>
            <person name="Bradley S.A."/>
            <person name="Tinsley C.R."/>
            <person name="Muiry J.A."/>
            <person name="Henderson P.J.F."/>
        </authorList>
    </citation>
    <scope>FUNCTION</scope>
    <scope>CATALYTIC ACTIVITY</scope>
    <scope>BIOPHYSICOCHEMICAL PROPERTIES</scope>
    <scope>TRANSCRIPTIONAL REGULATION</scope>
    <source>
        <strain>JM2418</strain>
    </source>
</reference>
<reference key="7">
    <citation type="journal article" date="1995" name="Mol. Microbiol.">
        <title>Topological analyses of the L-fucose-H+ symport protein, FucP, from Escherichia coli.</title>
        <authorList>
            <person name="Gunn F.J."/>
            <person name="Tate C.G."/>
            <person name="Sansom C.E."/>
            <person name="Henderson P.J.F."/>
        </authorList>
    </citation>
    <scope>TOPOLOGY</scope>
</reference>
<reference key="8">
    <citation type="journal article" date="1998" name="Biophys. J.">
        <title>Weak substrate binding to transport proteins studied by NMR.</title>
        <authorList>
            <person name="Spooner P.J."/>
            <person name="O'Reilly W.J."/>
            <person name="Homans S.W."/>
            <person name="Rutherford N.G."/>
            <person name="Henderson P.J."/>
            <person name="Watts A."/>
        </authorList>
    </citation>
    <scope>FUNCTION</scope>
    <scope>SUBSTRATE-BINDING</scope>
</reference>
<reference key="9">
    <citation type="journal article" date="2005" name="Science">
        <title>Global topology analysis of the Escherichia coli inner membrane proteome.</title>
        <authorList>
            <person name="Daley D.O."/>
            <person name="Rapp M."/>
            <person name="Granseth E."/>
            <person name="Melen K."/>
            <person name="Drew D."/>
            <person name="von Heijne G."/>
        </authorList>
    </citation>
    <scope>TOPOLOGY [LARGE SCALE ANALYSIS]</scope>
    <scope>SUBCELLULAR LOCATION</scope>
    <source>
        <strain>K12 / MG1655 / ATCC 47076</strain>
    </source>
</reference>
<reference key="10">
    <citation type="journal article" date="2012" name="Proc. Natl. Acad. Sci. U.S.A.">
        <title>Dynamics of the L-fucose/H+ symporter revealed by fluorescence spectroscopy.</title>
        <authorList>
            <person name="Sugihara J."/>
            <person name="Sun L."/>
            <person name="Yan N."/>
            <person name="Kaback H.R."/>
        </authorList>
    </citation>
    <scope>CATALYTIC ACTIVITY</scope>
    <scope>DOMAIN</scope>
    <scope>MUTAGENESIS OF TRP-38 AND TRP-278</scope>
</reference>
<reference evidence="9 10" key="11">
    <citation type="journal article" date="2010" name="Nature">
        <title>Structure of a fucose transporter in an outward-open conformation.</title>
        <authorList>
            <person name="Dang S."/>
            <person name="Sun L."/>
            <person name="Huang Y."/>
            <person name="Lu F."/>
            <person name="Liu Y."/>
            <person name="Gong H."/>
            <person name="Wang J."/>
            <person name="Yan N."/>
        </authorList>
    </citation>
    <scope>X-RAY CRYSTALLOGRAPHY (3.14 ANGSTROMS) OF WILD-TYPE AND OF MUTANT ALA-162</scope>
    <scope>SUBCELLULAR LOCATION</scope>
    <scope>TOPOLOGY</scope>
    <scope>DOMAIN</scope>
    <scope>MUTAGENESIS OF ASP-46 AND GLU-135</scope>
</reference>
<accession>P11551</accession>
<accession>Q2MA33</accession>
<organism>
    <name type="scientific">Escherichia coli (strain K12)</name>
    <dbReference type="NCBI Taxonomy" id="83333"/>
    <lineage>
        <taxon>Bacteria</taxon>
        <taxon>Pseudomonadati</taxon>
        <taxon>Pseudomonadota</taxon>
        <taxon>Gammaproteobacteria</taxon>
        <taxon>Enterobacterales</taxon>
        <taxon>Enterobacteriaceae</taxon>
        <taxon>Escherichia</taxon>
    </lineage>
</organism>
<name>FUCP_ECOLI</name>
<dbReference type="EMBL" id="X15025">
    <property type="protein sequence ID" value="CAA33126.1"/>
    <property type="molecule type" value="Genomic_DNA"/>
</dbReference>
<dbReference type="EMBL" id="U29581">
    <property type="protein sequence ID" value="AAB40451.1"/>
    <property type="molecule type" value="Genomic_DNA"/>
</dbReference>
<dbReference type="EMBL" id="U00096">
    <property type="protein sequence ID" value="AAC75843.1"/>
    <property type="molecule type" value="Genomic_DNA"/>
</dbReference>
<dbReference type="EMBL" id="AP009048">
    <property type="protein sequence ID" value="BAE76873.1"/>
    <property type="molecule type" value="Genomic_DNA"/>
</dbReference>
<dbReference type="EMBL" id="M31059">
    <property type="protein sequence ID" value="AAA23822.2"/>
    <property type="molecule type" value="Genomic_DNA"/>
</dbReference>
<dbReference type="PIR" id="JS0184">
    <property type="entry name" value="WQECFP"/>
</dbReference>
<dbReference type="RefSeq" id="NP_417281.1">
    <property type="nucleotide sequence ID" value="NC_000913.3"/>
</dbReference>
<dbReference type="RefSeq" id="WP_000528603.1">
    <property type="nucleotide sequence ID" value="NZ_STEB01000030.1"/>
</dbReference>
<dbReference type="PDB" id="3O7P">
    <property type="method" value="X-ray"/>
    <property type="resolution" value="3.20 A"/>
    <property type="chains" value="A=1-438"/>
</dbReference>
<dbReference type="PDB" id="3O7Q">
    <property type="method" value="X-ray"/>
    <property type="resolution" value="3.14 A"/>
    <property type="chains" value="A=1-438"/>
</dbReference>
<dbReference type="PDBsum" id="3O7P"/>
<dbReference type="PDBsum" id="3O7Q"/>
<dbReference type="BMRB" id="P11551"/>
<dbReference type="SMR" id="P11551"/>
<dbReference type="BioGRID" id="4260704">
    <property type="interactions" value="18"/>
</dbReference>
<dbReference type="FunCoup" id="P11551">
    <property type="interactions" value="278"/>
</dbReference>
<dbReference type="STRING" id="511145.b2801"/>
<dbReference type="TCDB" id="2.A.1.7.1">
    <property type="family name" value="the major facilitator superfamily (mfs)"/>
</dbReference>
<dbReference type="PaxDb" id="511145-b2801"/>
<dbReference type="EnsemblBacteria" id="AAC75843">
    <property type="protein sequence ID" value="AAC75843"/>
    <property type="gene ID" value="b2801"/>
</dbReference>
<dbReference type="GeneID" id="75203808"/>
<dbReference type="GeneID" id="947487"/>
<dbReference type="KEGG" id="ecj:JW2772"/>
<dbReference type="KEGG" id="eco:b2801"/>
<dbReference type="KEGG" id="ecoc:C3026_15400"/>
<dbReference type="PATRIC" id="fig|1411691.4.peg.3932"/>
<dbReference type="EchoBASE" id="EB0348"/>
<dbReference type="eggNOG" id="COG0738">
    <property type="taxonomic scope" value="Bacteria"/>
</dbReference>
<dbReference type="HOGENOM" id="CLU_028452_0_1_6"/>
<dbReference type="InParanoid" id="P11551"/>
<dbReference type="OMA" id="TWGFAYG"/>
<dbReference type="OrthoDB" id="9795150at2"/>
<dbReference type="PhylomeDB" id="P11551"/>
<dbReference type="BioCyc" id="EcoCyc:FUCP-MONOMER"/>
<dbReference type="BioCyc" id="MetaCyc:FUCP-MONOMER"/>
<dbReference type="EvolutionaryTrace" id="P11551"/>
<dbReference type="PRO" id="PR:P11551"/>
<dbReference type="Proteomes" id="UP000000625">
    <property type="component" value="Chromosome"/>
</dbReference>
<dbReference type="GO" id="GO:0016020">
    <property type="term" value="C:membrane"/>
    <property type="evidence" value="ECO:0000314"/>
    <property type="project" value="EcoCyc"/>
</dbReference>
<dbReference type="GO" id="GO:0005886">
    <property type="term" value="C:plasma membrane"/>
    <property type="evidence" value="ECO:0000314"/>
    <property type="project" value="EcoCyc"/>
</dbReference>
<dbReference type="GO" id="GO:0015518">
    <property type="term" value="F:arabinose:proton symporter activity"/>
    <property type="evidence" value="ECO:0000314"/>
    <property type="project" value="EcoCyc"/>
</dbReference>
<dbReference type="GO" id="GO:0015535">
    <property type="term" value="F:fucose:proton symporter activity"/>
    <property type="evidence" value="ECO:0000315"/>
    <property type="project" value="EcoCyc"/>
</dbReference>
<dbReference type="GO" id="GO:0015517">
    <property type="term" value="F:galactose:proton symporter activity"/>
    <property type="evidence" value="ECO:0000314"/>
    <property type="project" value="EcoCyc"/>
</dbReference>
<dbReference type="GO" id="GO:0009679">
    <property type="term" value="F:hexose:proton symporter activity"/>
    <property type="evidence" value="ECO:0000269"/>
    <property type="project" value="EcoCyc"/>
</dbReference>
<dbReference type="GO" id="GO:0015751">
    <property type="term" value="P:arabinose transmembrane transport"/>
    <property type="evidence" value="ECO:0000314"/>
    <property type="project" value="EcoCyc"/>
</dbReference>
<dbReference type="GO" id="GO:0015755">
    <property type="term" value="P:fructose transmembrane transport"/>
    <property type="evidence" value="ECO:0000269"/>
    <property type="project" value="EcoCyc"/>
</dbReference>
<dbReference type="GO" id="GO:0006004">
    <property type="term" value="P:fucose metabolic process"/>
    <property type="evidence" value="ECO:0007669"/>
    <property type="project" value="UniProtKB-KW"/>
</dbReference>
<dbReference type="GO" id="GO:0015756">
    <property type="term" value="P:fucose transmembrane transport"/>
    <property type="evidence" value="ECO:0000315"/>
    <property type="project" value="EcoCyc"/>
</dbReference>
<dbReference type="GO" id="GO:0015757">
    <property type="term" value="P:galactose transmembrane transport"/>
    <property type="evidence" value="ECO:0000314"/>
    <property type="project" value="EcoCyc"/>
</dbReference>
<dbReference type="CDD" id="cd17394">
    <property type="entry name" value="MFS_FucP_like"/>
    <property type="match status" value="1"/>
</dbReference>
<dbReference type="FunFam" id="1.20.1250.20:FF:000087">
    <property type="entry name" value="L-fucose:H+ symporter permease"/>
    <property type="match status" value="1"/>
</dbReference>
<dbReference type="FunFam" id="1.20.1250.20:FF:000089">
    <property type="entry name" value="L-fucose:H+ symporter permease"/>
    <property type="match status" value="1"/>
</dbReference>
<dbReference type="Gene3D" id="1.20.1250.20">
    <property type="entry name" value="MFS general substrate transporter like domains"/>
    <property type="match status" value="2"/>
</dbReference>
<dbReference type="InterPro" id="IPR005275">
    <property type="entry name" value="Lfuc_symporter_FucP"/>
</dbReference>
<dbReference type="InterPro" id="IPR011701">
    <property type="entry name" value="MFS"/>
</dbReference>
<dbReference type="InterPro" id="IPR020846">
    <property type="entry name" value="MFS_dom"/>
</dbReference>
<dbReference type="InterPro" id="IPR036259">
    <property type="entry name" value="MFS_trans_sf"/>
</dbReference>
<dbReference type="InterPro" id="IPR050375">
    <property type="entry name" value="MFS_TsgA-like"/>
</dbReference>
<dbReference type="NCBIfam" id="TIGR00885">
    <property type="entry name" value="fucP"/>
    <property type="match status" value="1"/>
</dbReference>
<dbReference type="NCBIfam" id="NF007524">
    <property type="entry name" value="PRK10133.1"/>
    <property type="match status" value="1"/>
</dbReference>
<dbReference type="PANTHER" id="PTHR43702">
    <property type="entry name" value="L-FUCOSE-PROTON SYMPORTER"/>
    <property type="match status" value="1"/>
</dbReference>
<dbReference type="PANTHER" id="PTHR43702:SF11">
    <property type="entry name" value="L-FUCOSE-PROTON SYMPORTER"/>
    <property type="match status" value="1"/>
</dbReference>
<dbReference type="Pfam" id="PF07690">
    <property type="entry name" value="MFS_1"/>
    <property type="match status" value="1"/>
</dbReference>
<dbReference type="SUPFAM" id="SSF103473">
    <property type="entry name" value="MFS general substrate transporter"/>
    <property type="match status" value="1"/>
</dbReference>
<dbReference type="PROSITE" id="PS50850">
    <property type="entry name" value="MFS"/>
    <property type="match status" value="1"/>
</dbReference>
<feature type="initiator methionine" description="Removed" evidence="5">
    <location>
        <position position="1"/>
    </location>
</feature>
<feature type="chain" id="PRO_0000094501" description="L-fucose-proton symporter">
    <location>
        <begin position="2"/>
        <end position="438"/>
    </location>
</feature>
<feature type="topological domain" description="Cytoplasmic" evidence="2">
    <location>
        <begin position="2"/>
        <end position="26"/>
    </location>
</feature>
<feature type="transmembrane region" description="Helical" evidence="2">
    <location>
        <begin position="27"/>
        <end position="53"/>
    </location>
</feature>
<feature type="topological domain" description="Periplasmic" evidence="2">
    <location>
        <begin position="54"/>
        <end position="61"/>
    </location>
</feature>
<feature type="transmembrane region" description="Helical" evidence="2">
    <location>
        <begin position="62"/>
        <end position="87"/>
    </location>
</feature>
<feature type="topological domain" description="Cytoplasmic" evidence="2">
    <location>
        <begin position="88"/>
        <end position="90"/>
    </location>
</feature>
<feature type="transmembrane region" description="Helical" evidence="2">
    <location>
        <begin position="91"/>
        <end position="113"/>
    </location>
</feature>
<feature type="topological domain" description="Periplasmic" evidence="2">
    <location>
        <begin position="114"/>
        <end position="117"/>
    </location>
</feature>
<feature type="transmembrane region" description="Helical" evidence="2">
    <location>
        <begin position="118"/>
        <end position="144"/>
    </location>
</feature>
<feature type="topological domain" description="Cytoplasmic" evidence="2">
    <location>
        <begin position="145"/>
        <end position="150"/>
    </location>
</feature>
<feature type="transmembrane region" description="Helical" evidence="2">
    <location>
        <begin position="151"/>
        <end position="178"/>
    </location>
</feature>
<feature type="topological domain" description="Periplasmic" evidence="2">
    <location>
        <begin position="179"/>
        <end position="193"/>
    </location>
</feature>
<feature type="transmembrane region" description="Helical" evidence="2">
    <location>
        <begin position="194"/>
        <end position="227"/>
    </location>
</feature>
<feature type="topological domain" description="Cytoplasmic" evidence="2">
    <location>
        <begin position="228"/>
        <end position="257"/>
    </location>
</feature>
<feature type="transmembrane region" description="Helical" evidence="2">
    <location>
        <begin position="258"/>
        <end position="287"/>
    </location>
</feature>
<feature type="topological domain" description="Periplasmic" evidence="2">
    <location>
        <begin position="288"/>
        <end position="293"/>
    </location>
</feature>
<feature type="transmembrane region" description="Helical" evidence="2">
    <location>
        <begin position="294"/>
        <end position="319"/>
    </location>
</feature>
<feature type="topological domain" description="Cytoplasmic" evidence="2">
    <location>
        <begin position="320"/>
        <end position="324"/>
    </location>
</feature>
<feature type="transmembrane region" description="Helical" evidence="2">
    <location>
        <begin position="325"/>
        <end position="343"/>
    </location>
</feature>
<feature type="topological domain" description="Periplasmic" evidence="2">
    <location>
        <begin position="344"/>
        <end position="347"/>
    </location>
</feature>
<feature type="transmembrane region" description="Helical" evidence="2">
    <location>
        <begin position="348"/>
        <end position="372"/>
    </location>
</feature>
<feature type="topological domain" description="Cytoplasmic" evidence="2">
    <location>
        <begin position="373"/>
        <end position="379"/>
    </location>
</feature>
<feature type="transmembrane region" description="Helical" evidence="2">
    <location>
        <begin position="380"/>
        <end position="407"/>
    </location>
</feature>
<feature type="topological domain" description="Periplasmic" evidence="2">
    <location>
        <begin position="408"/>
        <end position="410"/>
    </location>
</feature>
<feature type="transmembrane region" description="Helical" evidence="2">
    <location>
        <begin position="411"/>
        <end position="430"/>
    </location>
</feature>
<feature type="topological domain" description="Cytoplasmic" evidence="1 2">
    <location>
        <begin position="431"/>
        <end position="438"/>
    </location>
</feature>
<feature type="site" description="Important for activity" evidence="2">
    <location>
        <position position="46"/>
    </location>
</feature>
<feature type="site" description="Important for activity" evidence="2">
    <location>
        <position position="135"/>
    </location>
</feature>
<feature type="mutagenesis site" description="Strong decrease in L-fucose transport." evidence="3">
    <original>W</original>
    <variation>F</variation>
    <variation>I</variation>
    <variation>Y</variation>
    <location>
        <position position="38"/>
    </location>
</feature>
<feature type="mutagenesis site" description="Loss of L-fucose transport." evidence="2">
    <original>D</original>
    <variation>A</variation>
    <variation>N</variation>
    <location>
        <position position="46"/>
    </location>
</feature>
<feature type="mutagenesis site" description="Loss of L-fucose transport." evidence="2">
    <original>E</original>
    <variation>A</variation>
    <variation>D</variation>
    <variation>Q</variation>
    <location>
        <position position="135"/>
    </location>
</feature>
<feature type="mutagenesis site" description="Slight decrease in L-fucose transport." evidence="3">
    <original>W</original>
    <variation>F</variation>
    <variation>Y</variation>
    <location>
        <position position="278"/>
    </location>
</feature>
<feature type="mutagenesis site" description="30% decrease in L-fucose transport." evidence="3">
    <original>W</original>
    <variation>I</variation>
    <location>
        <position position="278"/>
    </location>
</feature>
<feature type="helix" evidence="12">
    <location>
        <begin position="25"/>
        <end position="55"/>
    </location>
</feature>
<feature type="helix" evidence="12">
    <location>
        <begin position="61"/>
        <end position="75"/>
    </location>
</feature>
<feature type="helix" evidence="12">
    <location>
        <begin position="78"/>
        <end position="87"/>
    </location>
</feature>
<feature type="helix" evidence="12">
    <location>
        <begin position="90"/>
        <end position="113"/>
    </location>
</feature>
<feature type="helix" evidence="12">
    <location>
        <begin position="117"/>
        <end position="144"/>
    </location>
</feature>
<feature type="helix" evidence="11">
    <location>
        <begin position="148"/>
        <end position="150"/>
    </location>
</feature>
<feature type="helix" evidence="12">
    <location>
        <begin position="151"/>
        <end position="172"/>
    </location>
</feature>
<feature type="helix" evidence="12">
    <location>
        <begin position="175"/>
        <end position="178"/>
    </location>
</feature>
<feature type="helix" evidence="12">
    <location>
        <begin position="186"/>
        <end position="191"/>
    </location>
</feature>
<feature type="helix" evidence="12">
    <location>
        <begin position="194"/>
        <end position="228"/>
    </location>
</feature>
<feature type="turn" evidence="11">
    <location>
        <begin position="235"/>
        <end position="237"/>
    </location>
</feature>
<feature type="helix" evidence="12">
    <location>
        <begin position="247"/>
        <end position="254"/>
    </location>
</feature>
<feature type="helix" evidence="12">
    <location>
        <begin position="259"/>
        <end position="288"/>
    </location>
</feature>
<feature type="helix" evidence="12">
    <location>
        <begin position="294"/>
        <end position="321"/>
    </location>
</feature>
<feature type="helix" evidence="12">
    <location>
        <begin position="324"/>
        <end position="344"/>
    </location>
</feature>
<feature type="helix" evidence="12">
    <location>
        <begin position="347"/>
        <end position="361"/>
    </location>
</feature>
<feature type="helix" evidence="12">
    <location>
        <begin position="364"/>
        <end position="373"/>
    </location>
</feature>
<feature type="helix" evidence="12">
    <location>
        <begin position="377"/>
        <end position="379"/>
    </location>
</feature>
<feature type="helix" evidence="12">
    <location>
        <begin position="380"/>
        <end position="389"/>
    </location>
</feature>
<feature type="helix" evidence="12">
    <location>
        <begin position="392"/>
        <end position="408"/>
    </location>
</feature>
<feature type="helix" evidence="12">
    <location>
        <begin position="412"/>
        <end position="415"/>
    </location>
</feature>
<feature type="helix" evidence="12">
    <location>
        <begin position="416"/>
        <end position="429"/>
    </location>
</feature>
<proteinExistence type="evidence at protein level"/>
<sequence>MGNTSIQTQSYRAVDKDAGQSRSYIIPFALLCSLFFLWAVANNLNDILLPQFQQAFTLTNFQAGLIQSAFYFGYFIIPIPAGILMKKLSYKAGIITGLFLYALGAALFWPAAEIMNYTLFLVGLFIIAAGLGCLETAANPFVTVLGPESSGHFRLNLAQTFNSFGAIIAVVFGQSLILSNVPHQSQDVLDKMSPEQLSAYKHSLVLSVQTPYMIIVAIVLLVALLIMLTKFPALQSDNHSDAKQGSFSASLSRLARIRHWRWAVLAQFCYVGAQTACWSYLIRYAVEEIPGMTAGFAANYLTGTMVCFFIGRFTGTWLISRFAPHKVLAAYALIAMALCLISAFAGGHVGLIALTLCSAFMSIQYPTIFSLGIKNLGQDTKYGSSFIVMTIIGGGIVTPVMGFVSDAAGNIPTAELIPALCFAVIFIFARFRSQTATN</sequence>
<gene>
    <name type="primary">fucP</name>
    <name type="ordered locus">b2801</name>
    <name type="ordered locus">JW2772</name>
</gene>